<proteinExistence type="inferred from homology"/>
<evidence type="ECO:0000255" key="1">
    <source>
        <dbReference type="HAMAP-Rule" id="MF_01808"/>
    </source>
</evidence>
<evidence type="ECO:0000255" key="2">
    <source>
        <dbReference type="PROSITE-ProRule" id="PRU01246"/>
    </source>
</evidence>
<evidence type="ECO:0000255" key="3">
    <source>
        <dbReference type="PROSITE-ProRule" id="PRU01248"/>
    </source>
</evidence>
<dbReference type="EMBL" id="CP000802">
    <property type="protein sequence ID" value="ABV08223.1"/>
    <property type="molecule type" value="Genomic_DNA"/>
</dbReference>
<dbReference type="RefSeq" id="WP_000130691.1">
    <property type="nucleotide sequence ID" value="NC_009800.1"/>
</dbReference>
<dbReference type="SMR" id="A8A6R9"/>
<dbReference type="GeneID" id="75059707"/>
<dbReference type="KEGG" id="ecx:EcHS_A4036"/>
<dbReference type="HOGENOM" id="CLU_027562_9_0_6"/>
<dbReference type="GO" id="GO:0005737">
    <property type="term" value="C:cytoplasm"/>
    <property type="evidence" value="ECO:0007669"/>
    <property type="project" value="UniProtKB-SubCell"/>
</dbReference>
<dbReference type="GO" id="GO:0003677">
    <property type="term" value="F:DNA binding"/>
    <property type="evidence" value="ECO:0007669"/>
    <property type="project" value="UniProtKB-KW"/>
</dbReference>
<dbReference type="GO" id="GO:0009037">
    <property type="term" value="F:tyrosine-based site-specific recombinase activity"/>
    <property type="evidence" value="ECO:0007669"/>
    <property type="project" value="UniProtKB-UniRule"/>
</dbReference>
<dbReference type="GO" id="GO:0051301">
    <property type="term" value="P:cell division"/>
    <property type="evidence" value="ECO:0007669"/>
    <property type="project" value="UniProtKB-KW"/>
</dbReference>
<dbReference type="GO" id="GO:0007059">
    <property type="term" value="P:chromosome segregation"/>
    <property type="evidence" value="ECO:0007669"/>
    <property type="project" value="UniProtKB-UniRule"/>
</dbReference>
<dbReference type="GO" id="GO:0006313">
    <property type="term" value="P:DNA transposition"/>
    <property type="evidence" value="ECO:0007669"/>
    <property type="project" value="UniProtKB-UniRule"/>
</dbReference>
<dbReference type="CDD" id="cd00798">
    <property type="entry name" value="INT_XerDC_C"/>
    <property type="match status" value="1"/>
</dbReference>
<dbReference type="FunFam" id="1.10.443.10:FF:000002">
    <property type="entry name" value="Tyrosine recombinase XerC"/>
    <property type="match status" value="1"/>
</dbReference>
<dbReference type="Gene3D" id="1.10.150.130">
    <property type="match status" value="1"/>
</dbReference>
<dbReference type="Gene3D" id="1.10.443.10">
    <property type="entry name" value="Intergrase catalytic core"/>
    <property type="match status" value="1"/>
</dbReference>
<dbReference type="HAMAP" id="MF_01808">
    <property type="entry name" value="Recomb_XerC_XerD"/>
    <property type="match status" value="1"/>
</dbReference>
<dbReference type="InterPro" id="IPR044068">
    <property type="entry name" value="CB"/>
</dbReference>
<dbReference type="InterPro" id="IPR011010">
    <property type="entry name" value="DNA_brk_join_enz"/>
</dbReference>
<dbReference type="InterPro" id="IPR013762">
    <property type="entry name" value="Integrase-like_cat_sf"/>
</dbReference>
<dbReference type="InterPro" id="IPR002104">
    <property type="entry name" value="Integrase_catalytic"/>
</dbReference>
<dbReference type="InterPro" id="IPR010998">
    <property type="entry name" value="Integrase_recombinase_N"/>
</dbReference>
<dbReference type="InterPro" id="IPR004107">
    <property type="entry name" value="Integrase_SAM-like_N"/>
</dbReference>
<dbReference type="InterPro" id="IPR011931">
    <property type="entry name" value="Recomb_XerC"/>
</dbReference>
<dbReference type="InterPro" id="IPR023009">
    <property type="entry name" value="Tyrosine_recombinase_XerC/XerD"/>
</dbReference>
<dbReference type="InterPro" id="IPR050090">
    <property type="entry name" value="Tyrosine_recombinase_XerCD"/>
</dbReference>
<dbReference type="NCBIfam" id="NF001399">
    <property type="entry name" value="PRK00283.1"/>
    <property type="match status" value="1"/>
</dbReference>
<dbReference type="NCBIfam" id="TIGR02224">
    <property type="entry name" value="recomb_XerC"/>
    <property type="match status" value="1"/>
</dbReference>
<dbReference type="PANTHER" id="PTHR30349">
    <property type="entry name" value="PHAGE INTEGRASE-RELATED"/>
    <property type="match status" value="1"/>
</dbReference>
<dbReference type="PANTHER" id="PTHR30349:SF81">
    <property type="entry name" value="TYROSINE RECOMBINASE XERC"/>
    <property type="match status" value="1"/>
</dbReference>
<dbReference type="Pfam" id="PF02899">
    <property type="entry name" value="Phage_int_SAM_1"/>
    <property type="match status" value="1"/>
</dbReference>
<dbReference type="Pfam" id="PF00589">
    <property type="entry name" value="Phage_integrase"/>
    <property type="match status" value="1"/>
</dbReference>
<dbReference type="SUPFAM" id="SSF56349">
    <property type="entry name" value="DNA breaking-rejoining enzymes"/>
    <property type="match status" value="1"/>
</dbReference>
<dbReference type="SUPFAM" id="SSF47823">
    <property type="entry name" value="lambda integrase-like, N-terminal domain"/>
    <property type="match status" value="1"/>
</dbReference>
<dbReference type="PROSITE" id="PS51900">
    <property type="entry name" value="CB"/>
    <property type="match status" value="1"/>
</dbReference>
<dbReference type="PROSITE" id="PS51898">
    <property type="entry name" value="TYR_RECOMBINASE"/>
    <property type="match status" value="1"/>
</dbReference>
<name>XERC_ECOHS</name>
<sequence>MTDLHTDVERYLRYLSVERQLSPITLLNYQRQLEAIINFASENGLQSWQQCDVTMVRNFAVRSRRKGLGAASLALRLSALRSFFDWLVSQNELKANPAKGVSAPKAPRHLPKNIDVDDMNRLLDIDINDPLAVRDRAMLEVMYGAGLRLSELVGLDIKHLDLESGEVWVMGKGSKERRLPIGRNAVAWIEHWLDLRDLFGSEDDALFLSKLGKRISARNVQKRFAEWGIKQGLNNHVHPHKLRHSFATHMLESSGDLRGVQELLGHANLSTTQIYTHLDFQHLASVYDAAHPRAKRGK</sequence>
<comment type="function">
    <text evidence="1">Site-specific tyrosine recombinase, which acts by catalyzing the cutting and rejoining of the recombining DNA molecules. Binds cooperatively to specific DNA consensus sequences that are separated from XerD binding sites by a short central region, forming the heterotetrameric XerC-XerD complex that recombines DNA substrates. The complex is essential to convert dimers of the bacterial chromosome into monomers to permit their segregation at cell division. It also contributes to the segregational stability of plasmids. In the complex XerC specifically exchanges the top DNA strands.</text>
</comment>
<comment type="activity regulation">
    <text evidence="1">FtsK may regulate the catalytic switch between XerC and XerD in the heterotetrameric complex during the two steps of the recombination process.</text>
</comment>
<comment type="subunit">
    <text evidence="1">Forms a cyclic heterotetrameric complex composed of two molecules of XerC and two molecules of XerD, in which XerC interacts with XerD via its C-terminal region, XerD interacts with XerC via its C-terminal region and so on.</text>
</comment>
<comment type="subcellular location">
    <subcellularLocation>
        <location evidence="1">Cytoplasm</location>
    </subcellularLocation>
</comment>
<comment type="similarity">
    <text evidence="1">Belongs to the 'phage' integrase family. XerC subfamily.</text>
</comment>
<organism>
    <name type="scientific">Escherichia coli O9:H4 (strain HS)</name>
    <dbReference type="NCBI Taxonomy" id="331112"/>
    <lineage>
        <taxon>Bacteria</taxon>
        <taxon>Pseudomonadati</taxon>
        <taxon>Pseudomonadota</taxon>
        <taxon>Gammaproteobacteria</taxon>
        <taxon>Enterobacterales</taxon>
        <taxon>Enterobacteriaceae</taxon>
        <taxon>Escherichia</taxon>
    </lineage>
</organism>
<reference key="1">
    <citation type="journal article" date="2008" name="J. Bacteriol.">
        <title>The pangenome structure of Escherichia coli: comparative genomic analysis of E. coli commensal and pathogenic isolates.</title>
        <authorList>
            <person name="Rasko D.A."/>
            <person name="Rosovitz M.J."/>
            <person name="Myers G.S.A."/>
            <person name="Mongodin E.F."/>
            <person name="Fricke W.F."/>
            <person name="Gajer P."/>
            <person name="Crabtree J."/>
            <person name="Sebaihia M."/>
            <person name="Thomson N.R."/>
            <person name="Chaudhuri R."/>
            <person name="Henderson I.R."/>
            <person name="Sperandio V."/>
            <person name="Ravel J."/>
        </authorList>
    </citation>
    <scope>NUCLEOTIDE SEQUENCE [LARGE SCALE GENOMIC DNA]</scope>
    <source>
        <strain>HS</strain>
    </source>
</reference>
<gene>
    <name evidence="1" type="primary">xerC</name>
    <name type="ordered locus">EcHS_A4036</name>
</gene>
<protein>
    <recommendedName>
        <fullName evidence="1">Tyrosine recombinase XerC</fullName>
    </recommendedName>
</protein>
<keyword id="KW-0131">Cell cycle</keyword>
<keyword id="KW-0132">Cell division</keyword>
<keyword id="KW-0159">Chromosome partition</keyword>
<keyword id="KW-0963">Cytoplasm</keyword>
<keyword id="KW-0229">DNA integration</keyword>
<keyword id="KW-0233">DNA recombination</keyword>
<keyword id="KW-0238">DNA-binding</keyword>
<accession>A8A6R9</accession>
<feature type="chain" id="PRO_1000070000" description="Tyrosine recombinase XerC">
    <location>
        <begin position="1"/>
        <end position="298"/>
    </location>
</feature>
<feature type="domain" description="Core-binding (CB)" evidence="3">
    <location>
        <begin position="2"/>
        <end position="88"/>
    </location>
</feature>
<feature type="domain" description="Tyr recombinase" evidence="2">
    <location>
        <begin position="109"/>
        <end position="288"/>
    </location>
</feature>
<feature type="active site" evidence="1">
    <location>
        <position position="148"/>
    </location>
</feature>
<feature type="active site" evidence="1">
    <location>
        <position position="172"/>
    </location>
</feature>
<feature type="active site" evidence="1">
    <location>
        <position position="240"/>
    </location>
</feature>
<feature type="active site" evidence="1">
    <location>
        <position position="243"/>
    </location>
</feature>
<feature type="active site" evidence="1">
    <location>
        <position position="266"/>
    </location>
</feature>
<feature type="active site" description="O-(3'-phospho-DNA)-tyrosine intermediate" evidence="1">
    <location>
        <position position="275"/>
    </location>
</feature>